<gene>
    <name evidence="4" type="primary">atr3</name>
</gene>
<sequence>MTSVDTMPPPMVRLESQPDDLMGSSDVADVSDLLPGHTNGLEDEVKIPATNGLKSHPVVTTGTEKTGVMPPLQPESKKNNKGVPWYHASPNDIDPVTRGLLENYSKIPSDQVQQHVIAIREKAWDVYPYPCIGQFLFLNLTINLSPYYPSLVSRLRDQNQTLLDLGCCFAQDVRKLVSDGAPSQNIYGADLYGEFMDLGFELFRDRKTLKSTFFPTDILNERDLLLKGLDGEMDVVYLGLFLHHFDFETCVKVCTRVTRLLKPKPGSLVMGVQVGSLVGDTKPIPIPSGGILWRHDIASLERVWEEVGALTGTKWKVEARLERGKGFGEKWQLEGTRRLGFEVYRL</sequence>
<reference key="1">
    <citation type="journal article" date="2021" name="MBio">
        <title>Linking a gene cluster to atranorin, a major cortical substance of lichens, through genetic dereplication and heterologous expression.</title>
        <authorList>
            <person name="Kim W."/>
            <person name="Liu R."/>
            <person name="Woo S."/>
            <person name="Kang K.B."/>
            <person name="Park H."/>
            <person name="Yu Y.H."/>
            <person name="Ha H.H."/>
            <person name="Oh S.Y."/>
            <person name="Yang J.H."/>
            <person name="Kim H."/>
            <person name="Yun S.H."/>
            <person name="Hur J.S."/>
        </authorList>
    </citation>
    <scope>NUCLEOTIDE SEQUENCE [GENOMIC DNA]</scope>
    <scope>FUNCTION</scope>
    <scope>CATALYTIC ACTIVITY</scope>
    <scope>PATHWAY</scope>
</reference>
<keyword id="KW-0489">Methyltransferase</keyword>
<keyword id="KW-0949">S-adenosyl-L-methionine</keyword>
<keyword id="KW-0808">Transferase</keyword>
<name>ATR3_STEAL</name>
<dbReference type="EC" id="2.1.3.-" evidence="3"/>
<dbReference type="EMBL" id="MZ277877">
    <property type="protein sequence ID" value="QXF68951.1"/>
    <property type="molecule type" value="Genomic_DNA"/>
</dbReference>
<dbReference type="UniPathway" id="UPA00213"/>
<dbReference type="GO" id="GO:0008168">
    <property type="term" value="F:methyltransferase activity"/>
    <property type="evidence" value="ECO:0007669"/>
    <property type="project" value="UniProtKB-KW"/>
</dbReference>
<dbReference type="GO" id="GO:0032259">
    <property type="term" value="P:methylation"/>
    <property type="evidence" value="ECO:0007669"/>
    <property type="project" value="UniProtKB-KW"/>
</dbReference>
<dbReference type="GO" id="GO:0016114">
    <property type="term" value="P:terpenoid biosynthetic process"/>
    <property type="evidence" value="ECO:0007669"/>
    <property type="project" value="UniProtKB-UniPathway"/>
</dbReference>
<dbReference type="Gene3D" id="3.40.50.150">
    <property type="entry name" value="Vaccinia Virus protein VP39"/>
    <property type="match status" value="1"/>
</dbReference>
<dbReference type="InterPro" id="IPR051654">
    <property type="entry name" value="Meroterpenoid_MTases"/>
</dbReference>
<dbReference type="InterPro" id="IPR041698">
    <property type="entry name" value="Methyltransf_25"/>
</dbReference>
<dbReference type="InterPro" id="IPR029063">
    <property type="entry name" value="SAM-dependent_MTases_sf"/>
</dbReference>
<dbReference type="PANTHER" id="PTHR35897">
    <property type="entry name" value="METHYLTRANSFERASE AUSD"/>
    <property type="match status" value="1"/>
</dbReference>
<dbReference type="PANTHER" id="PTHR35897:SF1">
    <property type="entry name" value="METHYLTRANSFERASE AUSD"/>
    <property type="match status" value="1"/>
</dbReference>
<dbReference type="Pfam" id="PF13649">
    <property type="entry name" value="Methyltransf_25"/>
    <property type="match status" value="1"/>
</dbReference>
<dbReference type="SUPFAM" id="SSF53335">
    <property type="entry name" value="S-adenosyl-L-methionine-dependent methyltransferases"/>
    <property type="match status" value="1"/>
</dbReference>
<accession>A0A8F4PN06</accession>
<protein>
    <recommendedName>
        <fullName evidence="4">O-methyltransferase atr3</fullName>
        <ecNumber evidence="3">2.1.3.-</ecNumber>
    </recommendedName>
    <alternativeName>
        <fullName evidence="4">Atranorin biosynthesis cluster protein 3</fullName>
    </alternativeName>
</protein>
<feature type="chain" id="PRO_0000455743" description="O-methyltransferase atr3">
    <location>
        <begin position="1"/>
        <end position="346"/>
    </location>
</feature>
<feature type="region of interest" description="Disordered" evidence="2">
    <location>
        <begin position="1"/>
        <end position="22"/>
    </location>
</feature>
<feature type="region of interest" description="Disordered" evidence="2">
    <location>
        <begin position="52"/>
        <end position="88"/>
    </location>
</feature>
<feature type="binding site" evidence="1">
    <location>
        <begin position="190"/>
        <end position="191"/>
    </location>
    <ligand>
        <name>S-adenosyl-L-methionine</name>
        <dbReference type="ChEBI" id="CHEBI:59789"/>
    </ligand>
</feature>
<feature type="binding site" evidence="1">
    <location>
        <begin position="217"/>
        <end position="218"/>
    </location>
    <ligand>
        <name>S-adenosyl-L-methionine</name>
        <dbReference type="ChEBI" id="CHEBI:59789"/>
    </ligand>
</feature>
<proteinExistence type="evidence at protein level"/>
<organism>
    <name type="scientific">Stereocaulon alpinum</name>
    <name type="common">Alpine snow lichen</name>
    <name type="synonym">Stereocaulon paschale var. alpinum</name>
    <dbReference type="NCBI Taxonomy" id="350623"/>
    <lineage>
        <taxon>Eukaryota</taxon>
        <taxon>Fungi</taxon>
        <taxon>Dikarya</taxon>
        <taxon>Ascomycota</taxon>
        <taxon>Pezizomycotina</taxon>
        <taxon>Lecanoromycetes</taxon>
        <taxon>OSLEUM clade</taxon>
        <taxon>Lecanoromycetidae</taxon>
        <taxon>Lecanorales</taxon>
        <taxon>Lecanorineae</taxon>
        <taxon>Stereocaulaceae</taxon>
        <taxon>Stereocaulon</taxon>
    </lineage>
</organism>
<evidence type="ECO:0000250" key="1">
    <source>
        <dbReference type="UniProtKB" id="Q3J7D1"/>
    </source>
</evidence>
<evidence type="ECO:0000256" key="2">
    <source>
        <dbReference type="SAM" id="MobiDB-lite"/>
    </source>
</evidence>
<evidence type="ECO:0000269" key="3">
    <source>
    </source>
</evidence>
<evidence type="ECO:0000303" key="4">
    <source>
    </source>
</evidence>
<evidence type="ECO:0000305" key="5"/>
<comment type="function">
    <text evidence="3">O-methyltransferase; part of the gene cluster that mediates the biosynthesis of atranorin, a depside of polyketide origin that accumulates in the cortical or medullary layers of lichen thalli (PubMed:34154413). Atr3 methylates the carboxyl group of 4-O-demethylbarbatic acid to yield proatranorin I (PubMed:34154413). Atr3 is also able to methylate the atr2 product proatranorin III to produce the final compound atranorin (PubMed:34154413). The first step in the pathway is performed by the non-reducing polyketide synthase atr1 that produces 4-O-demethylbarbatic acid composed of two 3-methylorsellinic acid (3MOA) moieties. The pathway continues with the actions of the cytochrome P450 monooygenase atr2 that catalizes the oxidation of c-9 and the O-methyltransferase atr3 that performs the methylation of the carboxyl group to yield atranorin, via the proatranorin II and III intermediates if atr2 acts first, or the proatranorin I intermediate if atr3 acts first (PubMed:34154413).</text>
</comment>
<comment type="catalytic activity">
    <reaction evidence="3">
        <text>4-O-demethylbarbatate + S-adenosyl-L-methionine = proatranorin I + S-adenosyl-L-homocysteine</text>
        <dbReference type="Rhea" id="RHEA:72899"/>
        <dbReference type="ChEBI" id="CHEBI:57856"/>
        <dbReference type="ChEBI" id="CHEBI:59789"/>
        <dbReference type="ChEBI" id="CHEBI:192547"/>
        <dbReference type="ChEBI" id="CHEBI:192548"/>
    </reaction>
    <physiologicalReaction direction="left-to-right" evidence="3">
        <dbReference type="Rhea" id="RHEA:72900"/>
    </physiologicalReaction>
</comment>
<comment type="pathway">
    <text evidence="3">Secondary metabolite biosynthesis; terpenoid biosynthesis.</text>
</comment>
<comment type="subunit">
    <text evidence="1">Homodimer.</text>
</comment>
<comment type="similarity">
    <text evidence="5">Belongs to the class I-like SAM-binding methyltransferase superfamily.</text>
</comment>